<protein>
    <recommendedName>
        <fullName evidence="1">Protein ApaG</fullName>
    </recommendedName>
</protein>
<name>APAG_AFIC5</name>
<dbReference type="EMBL" id="CP001196">
    <property type="protein sequence ID" value="ACI91800.1"/>
    <property type="molecule type" value="Genomic_DNA"/>
</dbReference>
<dbReference type="EMBL" id="CP002826">
    <property type="protein sequence ID" value="AEI07966.1"/>
    <property type="molecule type" value="Genomic_DNA"/>
</dbReference>
<dbReference type="RefSeq" id="WP_012561831.1">
    <property type="nucleotide sequence ID" value="NC_015684.1"/>
</dbReference>
<dbReference type="SMR" id="B6JD70"/>
<dbReference type="STRING" id="504832.OCA5_c32910"/>
<dbReference type="KEGG" id="oca:OCAR_4657"/>
<dbReference type="KEGG" id="ocg:OCA5_c32910"/>
<dbReference type="PATRIC" id="fig|504832.7.peg.3459"/>
<dbReference type="eggNOG" id="COG2967">
    <property type="taxonomic scope" value="Bacteria"/>
</dbReference>
<dbReference type="HOGENOM" id="CLU_128074_1_0_5"/>
<dbReference type="OrthoDB" id="9795226at2"/>
<dbReference type="Proteomes" id="UP000007730">
    <property type="component" value="Chromosome"/>
</dbReference>
<dbReference type="GO" id="GO:0070987">
    <property type="term" value="P:error-free translesion synthesis"/>
    <property type="evidence" value="ECO:0007669"/>
    <property type="project" value="TreeGrafter"/>
</dbReference>
<dbReference type="Gene3D" id="2.60.40.1470">
    <property type="entry name" value="ApaG domain"/>
    <property type="match status" value="1"/>
</dbReference>
<dbReference type="HAMAP" id="MF_00791">
    <property type="entry name" value="ApaG"/>
    <property type="match status" value="1"/>
</dbReference>
<dbReference type="InterPro" id="IPR007474">
    <property type="entry name" value="ApaG_domain"/>
</dbReference>
<dbReference type="InterPro" id="IPR036767">
    <property type="entry name" value="ApaG_sf"/>
</dbReference>
<dbReference type="InterPro" id="IPR023065">
    <property type="entry name" value="Uncharacterised_ApaG"/>
</dbReference>
<dbReference type="NCBIfam" id="NF003967">
    <property type="entry name" value="PRK05461.1"/>
    <property type="match status" value="1"/>
</dbReference>
<dbReference type="PANTHER" id="PTHR14289">
    <property type="entry name" value="F-BOX ONLY PROTEIN 3"/>
    <property type="match status" value="1"/>
</dbReference>
<dbReference type="PANTHER" id="PTHR14289:SF16">
    <property type="entry name" value="POLYMERASE DELTA-INTERACTING PROTEIN 2"/>
    <property type="match status" value="1"/>
</dbReference>
<dbReference type="Pfam" id="PF04379">
    <property type="entry name" value="DUF525"/>
    <property type="match status" value="1"/>
</dbReference>
<dbReference type="SUPFAM" id="SSF110069">
    <property type="entry name" value="ApaG-like"/>
    <property type="match status" value="1"/>
</dbReference>
<dbReference type="PROSITE" id="PS51087">
    <property type="entry name" value="APAG"/>
    <property type="match status" value="1"/>
</dbReference>
<gene>
    <name evidence="1" type="primary">apaG</name>
    <name type="ordered locus">OCAR_4657</name>
    <name type="ordered locus">OCA5_c32910</name>
</gene>
<feature type="chain" id="PRO_1000133799" description="Protein ApaG">
    <location>
        <begin position="1"/>
        <end position="130"/>
    </location>
</feature>
<feature type="domain" description="ApaG" evidence="1">
    <location>
        <begin position="3"/>
        <end position="127"/>
    </location>
</feature>
<proteinExistence type="inferred from homology"/>
<evidence type="ECO:0000255" key="1">
    <source>
        <dbReference type="HAMAP-Rule" id="MF_00791"/>
    </source>
</evidence>
<accession>B6JD70</accession>
<accession>F8BSN8</accession>
<reference key="1">
    <citation type="journal article" date="2008" name="J. Bacteriol.">
        <title>Genome sequence of the chemolithoautotrophic bacterium Oligotropha carboxidovorans OM5T.</title>
        <authorList>
            <person name="Paul D."/>
            <person name="Bridges S."/>
            <person name="Burgess S.C."/>
            <person name="Dandass Y."/>
            <person name="Lawrence M.L."/>
        </authorList>
    </citation>
    <scope>NUCLEOTIDE SEQUENCE [LARGE SCALE GENOMIC DNA]</scope>
    <source>
        <strain>ATCC 49405 / DSM 1227 / KCTC 32145 / OM5</strain>
    </source>
</reference>
<reference key="2">
    <citation type="journal article" date="2011" name="J. Bacteriol.">
        <title>Complete genome sequences of the chemolithoautotrophic Oligotropha carboxidovorans strains OM4 and OM5.</title>
        <authorList>
            <person name="Volland S."/>
            <person name="Rachinger M."/>
            <person name="Strittmatter A."/>
            <person name="Daniel R."/>
            <person name="Gottschalk G."/>
            <person name="Meyer O."/>
        </authorList>
    </citation>
    <scope>NUCLEOTIDE SEQUENCE [LARGE SCALE GENOMIC DNA]</scope>
    <source>
        <strain>ATCC 49405 / DSM 1227 / KCTC 32145 / OM5</strain>
    </source>
</reference>
<sequence>MYRAVTRQIEVLVEPEFLPERSSPEKQQFFWAYSITIVNGGPDSVQLKTRHWVITDGFGQQQEVRGEGVVGEQPVIGPGERYEYTSGVPLTTSSGFMTGSYQMVTEDGEAFDLAIPLFSLDSPDIRRTLN</sequence>
<organism>
    <name type="scientific">Afipia carboxidovorans (strain ATCC 49405 / DSM 1227 / KCTC 32145 / OM5)</name>
    <name type="common">Oligotropha carboxidovorans</name>
    <dbReference type="NCBI Taxonomy" id="504832"/>
    <lineage>
        <taxon>Bacteria</taxon>
        <taxon>Pseudomonadati</taxon>
        <taxon>Pseudomonadota</taxon>
        <taxon>Alphaproteobacteria</taxon>
        <taxon>Hyphomicrobiales</taxon>
        <taxon>Nitrobacteraceae</taxon>
        <taxon>Afipia</taxon>
    </lineage>
</organism>
<keyword id="KW-1185">Reference proteome</keyword>